<sequence length="358" mass="39965">MGITIKKSTAEQVLRKAYEAAASDDVFLEDWIFLATSLREVDAPRTYTAALVTALLARACDDRVDPRSIKEKYDDRAFSLRTLCHGVVVPMSVELGFDLGATGREPINNQPFFRYDQYSEIVRVQTKARPYLDRVSSALARVDEEDYSTEESFRALVAVLAVCISVANKKQRVAVGSAIVEASLIAETQSFVVSGHDVPRKLQACVAAGLDMVYSEVVSRRINDPSRDFPGDVQVILDGDPLLTVEVRGKSVSWEGLEQFVSSATYAGFRRVALMVDAASHVSLMSADDLTSALERKYECIVKVNESVSSFLRDVFVWSPRDVHSILSAFPEAMYRRMIEIEVREPELDRWAEIFPET</sequence>
<evidence type="ECO:0000303" key="1">
    <source>
    </source>
</evidence>
<evidence type="ECO:0000303" key="2">
    <source>
    </source>
</evidence>
<evidence type="ECO:0000305" key="3">
    <source>
    </source>
</evidence>
<organism>
    <name type="scientific">Streptomyces achromogenes</name>
    <dbReference type="NCBI Taxonomy" id="67255"/>
    <lineage>
        <taxon>Bacteria</taxon>
        <taxon>Bacillati</taxon>
        <taxon>Actinomycetota</taxon>
        <taxon>Actinomycetes</taxon>
        <taxon>Kitasatosporales</taxon>
        <taxon>Streptomycetaceae</taxon>
        <taxon>Streptomyces</taxon>
    </lineage>
</organism>
<keyword id="KW-0255">Endonuclease</keyword>
<keyword id="KW-0378">Hydrolase</keyword>
<keyword id="KW-0540">Nuclease</keyword>
<keyword id="KW-0680">Restriction system</keyword>
<dbReference type="EC" id="3.1.21.4"/>
<dbReference type="EMBL" id="AF027867">
    <property type="protein sequence ID" value="AAC97119.1"/>
    <property type="molecule type" value="Genomic_DNA"/>
</dbReference>
<dbReference type="SMR" id="O31074"/>
<dbReference type="BRENDA" id="3.1.21.4">
    <property type="organism ID" value="5915"/>
</dbReference>
<dbReference type="PRO" id="PR:O31074"/>
<dbReference type="GO" id="GO:0009036">
    <property type="term" value="F:type II site-specific deoxyribonuclease activity"/>
    <property type="evidence" value="ECO:0007669"/>
    <property type="project" value="UniProtKB-EC"/>
</dbReference>
<dbReference type="GO" id="GO:0009307">
    <property type="term" value="P:DNA restriction-modification system"/>
    <property type="evidence" value="ECO:0007669"/>
    <property type="project" value="UniProtKB-KW"/>
</dbReference>
<dbReference type="InterPro" id="IPR019066">
    <property type="entry name" value="Restrct_endonuc_II_SacI"/>
</dbReference>
<dbReference type="Pfam" id="PF09566">
    <property type="entry name" value="RE_SacI"/>
    <property type="match status" value="1"/>
</dbReference>
<feature type="chain" id="PRO_0000077364" description="Type II restriction enzyme SacI">
    <location>
        <begin position="1"/>
        <end position="358"/>
    </location>
</feature>
<gene>
    <name evidence="2" type="primary">sacIR</name>
</gene>
<proteinExistence type="predicted"/>
<name>T2S1_STRAH</name>
<accession>O31074</accession>
<reference key="1">
    <citation type="journal article" date="1998" name="Mol. Gen. Genet.">
        <title>Cloning and expression of the ApaLI, NspI, NspHI, SacI, ScaI, and SapI restriction-modification systems in Escherichia coli.</title>
        <authorList>
            <person name="Xu S.-Y."/>
            <person name="Xiao J.-P."/>
            <person name="Ettwiller L."/>
            <person name="Holden M."/>
            <person name="Aliotta J."/>
            <person name="Poh C.L."/>
            <person name="Dalton M."/>
            <person name="Robinson D.P."/>
            <person name="Petronzio T.R."/>
            <person name="Moran L."/>
            <person name="Ganatra M."/>
            <person name="Ware J."/>
            <person name="Slatko B."/>
            <person name="Benner J. II"/>
        </authorList>
    </citation>
    <scope>NUCLEOTIDE SEQUENCE [GENOMIC DNA]</scope>
    <scope>FUNCTION</scope>
    <source>
        <strain>ATCC 12767 / CBS 458.68 / DSM 40028 / JCM 4121 / NBRC 12735 / NRRL B-2120</strain>
    </source>
</reference>
<reference key="2">
    <citation type="journal article" date="2003" name="Nucleic Acids Res.">
        <title>A nomenclature for restriction enzymes, DNA methyltransferases, homing endonucleases and their genes.</title>
        <authorList>
            <person name="Roberts R.J."/>
            <person name="Belfort M."/>
            <person name="Bestor T."/>
            <person name="Bhagwat A.S."/>
            <person name="Bickle T.A."/>
            <person name="Bitinaite J."/>
            <person name="Blumenthal R.M."/>
            <person name="Degtyarev S.K."/>
            <person name="Dryden D.T."/>
            <person name="Dybvig K."/>
            <person name="Firman K."/>
            <person name="Gromova E.S."/>
            <person name="Gumport R.I."/>
            <person name="Halford S.E."/>
            <person name="Hattman S."/>
            <person name="Heitman J."/>
            <person name="Hornby D.P."/>
            <person name="Janulaitis A."/>
            <person name="Jeltsch A."/>
            <person name="Josephsen J."/>
            <person name="Kiss A."/>
            <person name="Klaenhammer T.R."/>
            <person name="Kobayashi I."/>
            <person name="Kong H."/>
            <person name="Krueger D.H."/>
            <person name="Lacks S."/>
            <person name="Marinus M.G."/>
            <person name="Miyahara M."/>
            <person name="Morgan R.D."/>
            <person name="Murray N.E."/>
            <person name="Nagaraja V."/>
            <person name="Piekarowicz A."/>
            <person name="Pingoud A."/>
            <person name="Raleigh E."/>
            <person name="Rao D.N."/>
            <person name="Reich N."/>
            <person name="Repin V.E."/>
            <person name="Selker E.U."/>
            <person name="Shaw P.C."/>
            <person name="Stein D.C."/>
            <person name="Stoddard B.L."/>
            <person name="Szybalski W."/>
            <person name="Trautner T.A."/>
            <person name="Van Etten J.L."/>
            <person name="Vitor J.M."/>
            <person name="Wilson G.G."/>
            <person name="Xu S.Y."/>
        </authorList>
    </citation>
    <scope>NOMENCLATURE</scope>
    <scope>SUBTYPE</scope>
</reference>
<protein>
    <recommendedName>
        <fullName evidence="1">Type II restriction enzyme SacI</fullName>
        <shortName>R.SacI</shortName>
        <ecNumber>3.1.21.4</ecNumber>
    </recommendedName>
    <alternativeName>
        <fullName>Endonuclease SacI</fullName>
    </alternativeName>
    <alternativeName>
        <fullName>Type-2 restriction enzyme SacI</fullName>
    </alternativeName>
</protein>
<comment type="function">
    <text evidence="1 3">A subtype P restriction enzyme that recognizes the double-stranded sequence 5'-GAGCTC-3' and cleaves after T-5.</text>
</comment>
<comment type="catalytic activity">
    <reaction>
        <text>Endonucleolytic cleavage of DNA to give specific double-stranded fragments with terminal 5'-phosphates.</text>
        <dbReference type="EC" id="3.1.21.4"/>
    </reaction>
</comment>